<reference key="1">
    <citation type="journal article" date="1998" name="Proc. Natl. Acad. Sci. U.S.A.">
        <title>The mosquito Anopheles stephensi limits malaria parasite development with inducible synthesis of nitric oxide.</title>
        <authorList>
            <person name="Luckhart S."/>
            <person name="Vodovotz Y."/>
            <person name="Cui L."/>
            <person name="Rosenberg R."/>
        </authorList>
    </citation>
    <scope>NUCLEOTIDE SEQUENCE [GENOMIC DNA]</scope>
    <scope>FUNCTION</scope>
    <scope>INDUCTION</scope>
</reference>
<reference key="2">
    <citation type="journal article" date="1999" name="Gene">
        <title>Gene structure and polymorphism of an invertebrate nitric oxide synthase gene.</title>
        <authorList>
            <person name="Luckhart S."/>
            <person name="Rosenberg R."/>
        </authorList>
    </citation>
    <scope>NUCLEOTIDE SEQUENCE [GENOMIC DNA]</scope>
</reference>
<name>NOS_ANOST</name>
<protein>
    <recommendedName>
        <fullName>Nitric oxide synthase</fullName>
        <shortName>NOS</shortName>
        <ecNumber>1.14.13.39</ecNumber>
    </recommendedName>
</protein>
<keyword id="KW-0112">Calmodulin-binding</keyword>
<keyword id="KW-0274">FAD</keyword>
<keyword id="KW-0285">Flavoprotein</keyword>
<keyword id="KW-0288">FMN</keyword>
<keyword id="KW-0349">Heme</keyword>
<keyword id="KW-0408">Iron</keyword>
<keyword id="KW-0479">Metal-binding</keyword>
<keyword id="KW-0521">NADP</keyword>
<keyword id="KW-0560">Oxidoreductase</keyword>
<keyword id="KW-1185">Reference proteome</keyword>
<comment type="function">
    <text evidence="7">Produces nitric oxide (NO) which is a messenger molecule with diverse functions throughout the body. Nitric oxide limits plasmodium development in the midgut.</text>
</comment>
<comment type="catalytic activity">
    <reaction>
        <text>2 L-arginine + 3 NADPH + 4 O2 + H(+) = 2 L-citrulline + 2 nitric oxide + 3 NADP(+) + 4 H2O</text>
        <dbReference type="Rhea" id="RHEA:19897"/>
        <dbReference type="ChEBI" id="CHEBI:15377"/>
        <dbReference type="ChEBI" id="CHEBI:15378"/>
        <dbReference type="ChEBI" id="CHEBI:15379"/>
        <dbReference type="ChEBI" id="CHEBI:16480"/>
        <dbReference type="ChEBI" id="CHEBI:32682"/>
        <dbReference type="ChEBI" id="CHEBI:57743"/>
        <dbReference type="ChEBI" id="CHEBI:57783"/>
        <dbReference type="ChEBI" id="CHEBI:58349"/>
        <dbReference type="EC" id="1.14.13.39"/>
    </reaction>
</comment>
<comment type="cofactor">
    <cofactor evidence="1">
        <name>heme b</name>
        <dbReference type="ChEBI" id="CHEBI:60344"/>
    </cofactor>
</comment>
<comment type="cofactor">
    <cofactor evidence="1">
        <name>FAD</name>
        <dbReference type="ChEBI" id="CHEBI:57692"/>
    </cofactor>
    <text evidence="1">Binds 1 FAD.</text>
</comment>
<comment type="cofactor">
    <cofactor evidence="1">
        <name>FMN</name>
        <dbReference type="ChEBI" id="CHEBI:58210"/>
    </cofactor>
    <text evidence="1">Binds 1 FMN.</text>
</comment>
<comment type="activity regulation">
    <text evidence="1">Stimulated by calcium/calmodulin.</text>
</comment>
<comment type="induction">
    <text evidence="7">Detected in the midgut and carcass soon after invasion of the midgut by plasmodium. Early induction is also primed by bacterial growth in the blood meal.</text>
</comment>
<comment type="similarity">
    <text evidence="8">Belongs to the NOS family.</text>
</comment>
<dbReference type="EC" id="1.14.13.39"/>
<dbReference type="EMBL" id="AF130134">
    <property type="protein sequence ID" value="AAC68577.1"/>
    <property type="molecule type" value="Genomic_DNA"/>
</dbReference>
<dbReference type="EMBL" id="AF130124">
    <property type="protein sequence ID" value="AAC68577.1"/>
    <property type="status" value="JOINED"/>
    <property type="molecule type" value="Genomic_DNA"/>
</dbReference>
<dbReference type="EMBL" id="AF130125">
    <property type="protein sequence ID" value="AAC68577.1"/>
    <property type="status" value="JOINED"/>
    <property type="molecule type" value="Genomic_DNA"/>
</dbReference>
<dbReference type="EMBL" id="AF130126">
    <property type="protein sequence ID" value="AAC68577.1"/>
    <property type="status" value="JOINED"/>
    <property type="molecule type" value="Genomic_DNA"/>
</dbReference>
<dbReference type="EMBL" id="AF130127">
    <property type="protein sequence ID" value="AAC68577.1"/>
    <property type="status" value="JOINED"/>
    <property type="molecule type" value="Genomic_DNA"/>
</dbReference>
<dbReference type="EMBL" id="AF130128">
    <property type="protein sequence ID" value="AAC68577.1"/>
    <property type="status" value="JOINED"/>
    <property type="molecule type" value="Genomic_DNA"/>
</dbReference>
<dbReference type="EMBL" id="AF130129">
    <property type="protein sequence ID" value="AAC68577.1"/>
    <property type="status" value="JOINED"/>
    <property type="molecule type" value="Genomic_DNA"/>
</dbReference>
<dbReference type="EMBL" id="AF130130">
    <property type="protein sequence ID" value="AAC68577.1"/>
    <property type="status" value="JOINED"/>
    <property type="molecule type" value="Genomic_DNA"/>
</dbReference>
<dbReference type="EMBL" id="AF130131">
    <property type="protein sequence ID" value="AAC68577.1"/>
    <property type="status" value="JOINED"/>
    <property type="molecule type" value="Genomic_DNA"/>
</dbReference>
<dbReference type="EMBL" id="AF130132">
    <property type="protein sequence ID" value="AAC68577.1"/>
    <property type="status" value="JOINED"/>
    <property type="molecule type" value="Genomic_DNA"/>
</dbReference>
<dbReference type="EMBL" id="AF130133">
    <property type="protein sequence ID" value="AAC68577.1"/>
    <property type="status" value="JOINED"/>
    <property type="molecule type" value="Genomic_DNA"/>
</dbReference>
<dbReference type="PIR" id="T31331">
    <property type="entry name" value="T31331"/>
</dbReference>
<dbReference type="SMR" id="O61608"/>
<dbReference type="STRING" id="30069.O61608"/>
<dbReference type="EnsemblMetazoa" id="ASTE008595-RA">
    <property type="protein sequence ID" value="ASTE008595-PA"/>
    <property type="gene ID" value="ASTE008595"/>
</dbReference>
<dbReference type="VEuPathDB" id="VectorBase:ASTE008593"/>
<dbReference type="VEuPathDB" id="VectorBase:ASTE008595"/>
<dbReference type="VEuPathDB" id="VectorBase:ASTEI03015"/>
<dbReference type="VEuPathDB" id="VectorBase:ASTEI03016"/>
<dbReference type="VEuPathDB" id="VectorBase:ASTEI20_044834"/>
<dbReference type="Proteomes" id="UP000076408">
    <property type="component" value="Unassembled WGS sequence"/>
</dbReference>
<dbReference type="GO" id="GO:0005516">
    <property type="term" value="F:calmodulin binding"/>
    <property type="evidence" value="ECO:0007669"/>
    <property type="project" value="UniProtKB-KW"/>
</dbReference>
<dbReference type="GO" id="GO:0050660">
    <property type="term" value="F:flavin adenine dinucleotide binding"/>
    <property type="evidence" value="ECO:0007669"/>
    <property type="project" value="InterPro"/>
</dbReference>
<dbReference type="GO" id="GO:0010181">
    <property type="term" value="F:FMN binding"/>
    <property type="evidence" value="ECO:0007669"/>
    <property type="project" value="InterPro"/>
</dbReference>
<dbReference type="GO" id="GO:0020037">
    <property type="term" value="F:heme binding"/>
    <property type="evidence" value="ECO:0007669"/>
    <property type="project" value="InterPro"/>
</dbReference>
<dbReference type="GO" id="GO:0046872">
    <property type="term" value="F:metal ion binding"/>
    <property type="evidence" value="ECO:0007669"/>
    <property type="project" value="UniProtKB-KW"/>
</dbReference>
<dbReference type="GO" id="GO:0050661">
    <property type="term" value="F:NADP binding"/>
    <property type="evidence" value="ECO:0007669"/>
    <property type="project" value="InterPro"/>
</dbReference>
<dbReference type="GO" id="GO:0004517">
    <property type="term" value="F:nitric-oxide synthase activity"/>
    <property type="evidence" value="ECO:0007669"/>
    <property type="project" value="UniProtKB-EC"/>
</dbReference>
<dbReference type="GO" id="GO:0006809">
    <property type="term" value="P:nitric oxide biosynthetic process"/>
    <property type="evidence" value="ECO:0007669"/>
    <property type="project" value="InterPro"/>
</dbReference>
<dbReference type="CDD" id="cd00795">
    <property type="entry name" value="NOS_oxygenase_euk"/>
    <property type="match status" value="1"/>
</dbReference>
<dbReference type="FunFam" id="3.90.440.10:FF:000001">
    <property type="entry name" value="Endothelial nitric oxide synthase"/>
    <property type="match status" value="1"/>
</dbReference>
<dbReference type="FunFam" id="1.20.990.10:FF:000002">
    <property type="entry name" value="Nitric oxide synthase"/>
    <property type="match status" value="1"/>
</dbReference>
<dbReference type="FunFam" id="3.40.50.360:FF:000033">
    <property type="entry name" value="Nitric oxide synthase"/>
    <property type="match status" value="1"/>
</dbReference>
<dbReference type="FunFam" id="3.40.50.80:FF:000003">
    <property type="entry name" value="Nitric oxide synthase"/>
    <property type="match status" value="1"/>
</dbReference>
<dbReference type="Gene3D" id="3.40.50.360">
    <property type="match status" value="1"/>
</dbReference>
<dbReference type="Gene3D" id="1.20.990.10">
    <property type="entry name" value="NADPH-cytochrome p450 Reductase, Chain A, domain 3"/>
    <property type="match status" value="1"/>
</dbReference>
<dbReference type="Gene3D" id="3.90.340.10">
    <property type="entry name" value="Nitric Oxide Synthase, Chain A, domain 1"/>
    <property type="match status" value="1"/>
</dbReference>
<dbReference type="Gene3D" id="3.90.1230.10">
    <property type="entry name" value="Nitric Oxide Synthase, Chain A, domain 3"/>
    <property type="match status" value="1"/>
</dbReference>
<dbReference type="Gene3D" id="3.90.440.10">
    <property type="entry name" value="Nitric Oxide Synthase,Heme Domain,Chain A domain 2"/>
    <property type="match status" value="1"/>
</dbReference>
<dbReference type="Gene3D" id="3.40.50.80">
    <property type="entry name" value="Nucleotide-binding domain of ferredoxin-NADP reductase (FNR) module"/>
    <property type="match status" value="1"/>
</dbReference>
<dbReference type="Gene3D" id="2.40.30.10">
    <property type="entry name" value="Translation factors"/>
    <property type="match status" value="1"/>
</dbReference>
<dbReference type="InterPro" id="IPR003097">
    <property type="entry name" value="CysJ-like_FAD-binding"/>
</dbReference>
<dbReference type="InterPro" id="IPR017927">
    <property type="entry name" value="FAD-bd_FR_type"/>
</dbReference>
<dbReference type="InterPro" id="IPR001094">
    <property type="entry name" value="Flavdoxin-like"/>
</dbReference>
<dbReference type="InterPro" id="IPR008254">
    <property type="entry name" value="Flavodoxin/NO_synth"/>
</dbReference>
<dbReference type="InterPro" id="IPR001709">
    <property type="entry name" value="Flavoprot_Pyr_Nucl_cyt_Rdtase"/>
</dbReference>
<dbReference type="InterPro" id="IPR029039">
    <property type="entry name" value="Flavoprotein-like_sf"/>
</dbReference>
<dbReference type="InterPro" id="IPR039261">
    <property type="entry name" value="FNR_nucleotide-bd"/>
</dbReference>
<dbReference type="InterPro" id="IPR023173">
    <property type="entry name" value="NADPH_Cyt_P450_Rdtase_alpha"/>
</dbReference>
<dbReference type="InterPro" id="IPR050607">
    <property type="entry name" value="NOS"/>
</dbReference>
<dbReference type="InterPro" id="IPR044943">
    <property type="entry name" value="NOS_dom_1"/>
</dbReference>
<dbReference type="InterPro" id="IPR044940">
    <property type="entry name" value="NOS_dom_2"/>
</dbReference>
<dbReference type="InterPro" id="IPR044944">
    <property type="entry name" value="NOS_dom_3"/>
</dbReference>
<dbReference type="InterPro" id="IPR012144">
    <property type="entry name" value="NOS_euk"/>
</dbReference>
<dbReference type="InterPro" id="IPR004030">
    <property type="entry name" value="NOS_N"/>
</dbReference>
<dbReference type="InterPro" id="IPR036119">
    <property type="entry name" value="NOS_N_sf"/>
</dbReference>
<dbReference type="InterPro" id="IPR001433">
    <property type="entry name" value="OxRdtase_FAD/NAD-bd"/>
</dbReference>
<dbReference type="InterPro" id="IPR017938">
    <property type="entry name" value="Riboflavin_synthase-like_b-brl"/>
</dbReference>
<dbReference type="PANTHER" id="PTHR43410:SF1">
    <property type="entry name" value="NITRIC OXIDE SYNTHASE"/>
    <property type="match status" value="1"/>
</dbReference>
<dbReference type="PANTHER" id="PTHR43410">
    <property type="entry name" value="NITRIC OXIDE SYNTHASE OXYGENASE"/>
    <property type="match status" value="1"/>
</dbReference>
<dbReference type="Pfam" id="PF00667">
    <property type="entry name" value="FAD_binding_1"/>
    <property type="match status" value="1"/>
</dbReference>
<dbReference type="Pfam" id="PF00258">
    <property type="entry name" value="Flavodoxin_1"/>
    <property type="match status" value="1"/>
</dbReference>
<dbReference type="Pfam" id="PF00175">
    <property type="entry name" value="NAD_binding_1"/>
    <property type="match status" value="1"/>
</dbReference>
<dbReference type="Pfam" id="PF02898">
    <property type="entry name" value="NO_synthase"/>
    <property type="match status" value="1"/>
</dbReference>
<dbReference type="PIRSF" id="PIRSF000333">
    <property type="entry name" value="NOS"/>
    <property type="match status" value="1"/>
</dbReference>
<dbReference type="PRINTS" id="PR00369">
    <property type="entry name" value="FLAVODOXIN"/>
</dbReference>
<dbReference type="PRINTS" id="PR00371">
    <property type="entry name" value="FPNCR"/>
</dbReference>
<dbReference type="SUPFAM" id="SSF52343">
    <property type="entry name" value="Ferredoxin reductase-like, C-terminal NADP-linked domain"/>
    <property type="match status" value="1"/>
</dbReference>
<dbReference type="SUPFAM" id="SSF52218">
    <property type="entry name" value="Flavoproteins"/>
    <property type="match status" value="1"/>
</dbReference>
<dbReference type="SUPFAM" id="SSF56512">
    <property type="entry name" value="Nitric oxide (NO) synthase oxygenase domain"/>
    <property type="match status" value="1"/>
</dbReference>
<dbReference type="SUPFAM" id="SSF63380">
    <property type="entry name" value="Riboflavin synthase domain-like"/>
    <property type="match status" value="1"/>
</dbReference>
<dbReference type="PROSITE" id="PS51384">
    <property type="entry name" value="FAD_FR"/>
    <property type="match status" value="1"/>
</dbReference>
<dbReference type="PROSITE" id="PS50902">
    <property type="entry name" value="FLAVODOXIN_LIKE"/>
    <property type="match status" value="1"/>
</dbReference>
<dbReference type="PROSITE" id="PS60001">
    <property type="entry name" value="NOS"/>
    <property type="match status" value="1"/>
</dbReference>
<feature type="chain" id="PRO_0000170950" description="Nitric oxide synthase">
    <location>
        <begin position="1"/>
        <end position="1247"/>
    </location>
</feature>
<feature type="domain" description="Flavodoxin-like" evidence="4">
    <location>
        <begin position="567"/>
        <end position="766"/>
    </location>
</feature>
<feature type="domain" description="FAD-binding FR-type" evidence="5">
    <location>
        <begin position="795"/>
        <end position="1065"/>
    </location>
</feature>
<feature type="region of interest" description="Disordered" evidence="6">
    <location>
        <begin position="13"/>
        <end position="33"/>
    </location>
</feature>
<feature type="region of interest" description="Calmodulin-binding" evidence="3">
    <location>
        <begin position="537"/>
        <end position="557"/>
    </location>
</feature>
<feature type="binding site" evidence="2">
    <location>
        <position position="146"/>
    </location>
    <ligand>
        <name>(6R)-L-erythro-5,6,7,8-tetrahydrobiopterin</name>
        <dbReference type="ChEBI" id="CHEBI:59560"/>
    </ligand>
</feature>
<feature type="binding site" description="axial binding residue" evidence="2">
    <location>
        <position position="224"/>
    </location>
    <ligand>
        <name>heme b</name>
        <dbReference type="ChEBI" id="CHEBI:60344"/>
    </ligand>
    <ligandPart>
        <name>Fe</name>
        <dbReference type="ChEBI" id="CHEBI:18248"/>
    </ligandPart>
</feature>
<feature type="binding site" evidence="2">
    <location>
        <position position="287"/>
    </location>
    <ligand>
        <name>L-arginine</name>
        <dbReference type="ChEBI" id="CHEBI:32682"/>
    </ligand>
</feature>
<feature type="binding site" evidence="2">
    <location>
        <position position="396"/>
    </location>
    <ligand>
        <name>L-arginine</name>
        <dbReference type="ChEBI" id="CHEBI:32682"/>
    </ligand>
</feature>
<feature type="binding site" evidence="2">
    <location>
        <position position="397"/>
    </location>
    <ligand>
        <name>L-arginine</name>
        <dbReference type="ChEBI" id="CHEBI:32682"/>
    </ligand>
</feature>
<feature type="binding site" evidence="2">
    <location>
        <position position="401"/>
    </location>
    <ligand>
        <name>L-arginine</name>
        <dbReference type="ChEBI" id="CHEBI:32682"/>
    </ligand>
</feature>
<feature type="binding site" evidence="2">
    <location>
        <position position="406"/>
    </location>
    <ligand>
        <name>L-arginine</name>
        <dbReference type="ChEBI" id="CHEBI:32682"/>
    </ligand>
</feature>
<feature type="binding site" evidence="2">
    <location>
        <position position="487"/>
    </location>
    <ligand>
        <name>(6R)-L-erythro-5,6,7,8-tetrahydrobiopterin</name>
        <dbReference type="ChEBI" id="CHEBI:59560"/>
    </ligand>
</feature>
<feature type="binding site" evidence="2">
    <location>
        <position position="500"/>
    </location>
    <ligand>
        <name>(6R)-L-erythro-5,6,7,8-tetrahydrobiopterin</name>
        <dbReference type="ChEBI" id="CHEBI:59560"/>
    </ligand>
</feature>
<feature type="binding site" evidence="2">
    <location>
        <position position="515"/>
    </location>
    <ligand>
        <name>heme b</name>
        <dbReference type="ChEBI" id="CHEBI:60344"/>
    </ligand>
</feature>
<feature type="binding site" evidence="4">
    <location>
        <begin position="712"/>
        <end position="743"/>
    </location>
    <ligand>
        <name>FMN</name>
        <dbReference type="ChEBI" id="CHEBI:58210"/>
    </ligand>
</feature>
<feature type="binding site" evidence="1">
    <location>
        <begin position="855"/>
        <end position="866"/>
    </location>
    <ligand>
        <name>FAD</name>
        <dbReference type="ChEBI" id="CHEBI:57692"/>
    </ligand>
</feature>
<feature type="binding site" evidence="1">
    <location>
        <begin position="998"/>
        <end position="1008"/>
    </location>
    <ligand>
        <name>FAD</name>
        <dbReference type="ChEBI" id="CHEBI:57692"/>
    </ligand>
</feature>
<feature type="binding site" evidence="1">
    <location>
        <begin position="1073"/>
        <end position="1091"/>
    </location>
    <ligand>
        <name>NADP(+)</name>
        <dbReference type="ChEBI" id="CHEBI:58349"/>
    </ligand>
</feature>
<feature type="binding site" evidence="1">
    <location>
        <begin position="1170"/>
        <end position="1185"/>
    </location>
    <ligand>
        <name>NADP(+)</name>
        <dbReference type="ChEBI" id="CHEBI:58349"/>
    </ligand>
</feature>
<accession>O61608</accession>
<sequence length="1247" mass="141651">MADTTTVVVERREVAEGRESSKANHIGEERRGYDVSRKRCSISVHGGGTEGGGGNMRTNYRELSPASLRIHRKSSHDIRNTLLGPDGEVLHLHDPSGKGGDGMGKMPAVVKPIKLKSIVTKAESYDTMHGKASDVMSCSREVCMGSVMTPHVIGTETRKPEIVQQHAKDFLDQYYSSIRRLKSPAHDSRWQQVQKEVEATGSYHLTETELIYGAKLAWRNSSRCIGRIQWSKLQVFDCRYVTTTSGMFEAICNHIKYATNKGNLRSAITIFPQRTDGKHDYRIWNNQIISYAGYKNADGKIIGDPANVEFTDFCVKLGWKSKRTEWDILPLVVSANGHDPDYFDYPPELILEVPLSHPQFKWFAELNLRWYAVPMVSSMLFDCGGIQFTATAFSGWYMSTEIGCRNLCDANRRNLLEPIAIKMGLDTRNPTSLWKDKALVEINIAVLHSYQSRNITIVDHHTASESFMKHFENETKLRNGCPADWIWIVPPMSASVTPVFHQEMAVYYLRPSFEYQESAMKTHIWKKGRDSAKNKKPRRKFNFKQIARAVKFTSKLFGRALSRRIKATVLYATETGRSEQYARQLVELLGHAFNAQIYCMSDYDISSIEHEALLLVVASTFGNGDPPENGELFAQDLYAMKLHESGHHQAHSELTIAASSKSFIKANSRSDLGKFGPMGGRKIDRLDSLRGSTTDTLSEETFGPLSNVRFAVFALGSSAYPNFCAFGKYIDNILGELGGERLMKMATGDEICGQEQAFRKWAPEVFKIACETFCLDPEETLSDAAFALQSELSENTVRYAPVAEYESLDRALSKFHNKKSMECSVKRNPINLHCEMNGTERSTILVEIMAEGIDYEPGDHVGIFPANRKEIVDGIIERLTGVNDPDEMLQLQVLKEKQTQNGVYKSWEPHERLPVCTLRTLLTRFLDITTPPTRQLLTYLASCCGDKADEERLLMLANESSVYEDWRYWKLPHLLEVLEEFPSCRPPAAVFVAQLNALQPRFYSISSSPRKYSNEIHLTVAIVTYRAEDGEGAEHYGVCSNYLANLQSDDKIYLFVRSAPSFHMSKDRTKPVILIGPGTGIAPFRSFWQEWDHIKTEMVDCKIPKVWLFFGCRTKNVDLYRDEKEEMVQHGVLDRVFLALSREENIPKTYVQDLALKEAESISELIMQEKGHIYVCGDVTMAEHVYQTLRKILATREKRTETEMEKYMLTLRDENRYHEDIFGITLRTAEIHNKSRATARIRMASQP</sequence>
<organism>
    <name type="scientific">Anopheles stephensi</name>
    <name type="common">Indo-Pakistan malaria mosquito</name>
    <dbReference type="NCBI Taxonomy" id="30069"/>
    <lineage>
        <taxon>Eukaryota</taxon>
        <taxon>Metazoa</taxon>
        <taxon>Ecdysozoa</taxon>
        <taxon>Arthropoda</taxon>
        <taxon>Hexapoda</taxon>
        <taxon>Insecta</taxon>
        <taxon>Pterygota</taxon>
        <taxon>Neoptera</taxon>
        <taxon>Endopterygota</taxon>
        <taxon>Diptera</taxon>
        <taxon>Nematocera</taxon>
        <taxon>Culicoidea</taxon>
        <taxon>Culicidae</taxon>
        <taxon>Anophelinae</taxon>
        <taxon>Anopheles</taxon>
    </lineage>
</organism>
<proteinExistence type="evidence at transcript level"/>
<evidence type="ECO:0000250" key="1"/>
<evidence type="ECO:0000250" key="2">
    <source>
        <dbReference type="UniProtKB" id="P29474"/>
    </source>
</evidence>
<evidence type="ECO:0000255" key="3"/>
<evidence type="ECO:0000255" key="4">
    <source>
        <dbReference type="PROSITE-ProRule" id="PRU00088"/>
    </source>
</evidence>
<evidence type="ECO:0000255" key="5">
    <source>
        <dbReference type="PROSITE-ProRule" id="PRU00716"/>
    </source>
</evidence>
<evidence type="ECO:0000256" key="6">
    <source>
        <dbReference type="SAM" id="MobiDB-lite"/>
    </source>
</evidence>
<evidence type="ECO:0000269" key="7">
    <source>
    </source>
</evidence>
<evidence type="ECO:0000305" key="8"/>